<reference key="1">
    <citation type="journal article" date="2007" name="PLoS ONE">
        <title>Genome sequencing shows that European isolates of Francisella tularensis subspecies tularensis are almost identical to US laboratory strain Schu S4.</title>
        <authorList>
            <person name="Chaudhuri R.R."/>
            <person name="Ren C.-P."/>
            <person name="Desmond L."/>
            <person name="Vincent G.A."/>
            <person name="Silman N.J."/>
            <person name="Brehm J.K."/>
            <person name="Elmore M.J."/>
            <person name="Hudson M.J."/>
            <person name="Forsman M."/>
            <person name="Isherwood K.E."/>
            <person name="Gurycova D."/>
            <person name="Minton N.P."/>
            <person name="Titball R.W."/>
            <person name="Pallen M.J."/>
            <person name="Vipond R."/>
        </authorList>
    </citation>
    <scope>NUCLEOTIDE SEQUENCE [LARGE SCALE GENOMIC DNA]</scope>
    <source>
        <strain>FSC 198</strain>
    </source>
</reference>
<proteinExistence type="inferred from homology"/>
<keyword id="KW-0032">Aminotransferase</keyword>
<keyword id="KW-0808">Transferase</keyword>
<feature type="chain" id="PRO_1000047666" description="Aminomethyltransferase">
    <location>
        <begin position="1"/>
        <end position="358"/>
    </location>
</feature>
<protein>
    <recommendedName>
        <fullName evidence="1">Aminomethyltransferase</fullName>
        <ecNumber evidence="1">2.1.2.10</ecNumber>
    </recommendedName>
    <alternativeName>
        <fullName evidence="1">Glycine cleavage system T protein</fullName>
    </alternativeName>
</protein>
<evidence type="ECO:0000255" key="1">
    <source>
        <dbReference type="HAMAP-Rule" id="MF_00259"/>
    </source>
</evidence>
<name>GCST_FRAT1</name>
<organism>
    <name type="scientific">Francisella tularensis subsp. tularensis (strain FSC 198)</name>
    <dbReference type="NCBI Taxonomy" id="393115"/>
    <lineage>
        <taxon>Bacteria</taxon>
        <taxon>Pseudomonadati</taxon>
        <taxon>Pseudomonadota</taxon>
        <taxon>Gammaproteobacteria</taxon>
        <taxon>Thiotrichales</taxon>
        <taxon>Francisellaceae</taxon>
        <taxon>Francisella</taxon>
    </lineage>
</organism>
<comment type="function">
    <text evidence="1">The glycine cleavage system catalyzes the degradation of glycine.</text>
</comment>
<comment type="catalytic activity">
    <reaction evidence="1">
        <text>N(6)-[(R)-S(8)-aminomethyldihydrolipoyl]-L-lysyl-[protein] + (6S)-5,6,7,8-tetrahydrofolate = N(6)-[(R)-dihydrolipoyl]-L-lysyl-[protein] + (6R)-5,10-methylene-5,6,7,8-tetrahydrofolate + NH4(+)</text>
        <dbReference type="Rhea" id="RHEA:16945"/>
        <dbReference type="Rhea" id="RHEA-COMP:10475"/>
        <dbReference type="Rhea" id="RHEA-COMP:10492"/>
        <dbReference type="ChEBI" id="CHEBI:15636"/>
        <dbReference type="ChEBI" id="CHEBI:28938"/>
        <dbReference type="ChEBI" id="CHEBI:57453"/>
        <dbReference type="ChEBI" id="CHEBI:83100"/>
        <dbReference type="ChEBI" id="CHEBI:83143"/>
        <dbReference type="EC" id="2.1.2.10"/>
    </reaction>
</comment>
<comment type="subunit">
    <text evidence="1">The glycine cleavage system is composed of four proteins: P, T, L and H.</text>
</comment>
<comment type="similarity">
    <text evidence="1">Belongs to the GcvT family.</text>
</comment>
<gene>
    <name evidence="1" type="primary">gcvT</name>
    <name type="ordered locus">FTF0407</name>
</gene>
<dbReference type="EC" id="2.1.2.10" evidence="1"/>
<dbReference type="EMBL" id="AM286280">
    <property type="protein sequence ID" value="CAL08423.1"/>
    <property type="molecule type" value="Genomic_DNA"/>
</dbReference>
<dbReference type="RefSeq" id="WP_003020116.1">
    <property type="nucleotide sequence ID" value="NC_008245.1"/>
</dbReference>
<dbReference type="SMR" id="Q14J42"/>
<dbReference type="KEGG" id="ftf:FTF0407"/>
<dbReference type="HOGENOM" id="CLU_007884_10_2_6"/>
<dbReference type="GO" id="GO:0005829">
    <property type="term" value="C:cytosol"/>
    <property type="evidence" value="ECO:0007669"/>
    <property type="project" value="TreeGrafter"/>
</dbReference>
<dbReference type="GO" id="GO:0005960">
    <property type="term" value="C:glycine cleavage complex"/>
    <property type="evidence" value="ECO:0007669"/>
    <property type="project" value="InterPro"/>
</dbReference>
<dbReference type="GO" id="GO:0004047">
    <property type="term" value="F:aminomethyltransferase activity"/>
    <property type="evidence" value="ECO:0007669"/>
    <property type="project" value="UniProtKB-UniRule"/>
</dbReference>
<dbReference type="GO" id="GO:0008483">
    <property type="term" value="F:transaminase activity"/>
    <property type="evidence" value="ECO:0007669"/>
    <property type="project" value="UniProtKB-KW"/>
</dbReference>
<dbReference type="GO" id="GO:0019464">
    <property type="term" value="P:glycine decarboxylation via glycine cleavage system"/>
    <property type="evidence" value="ECO:0007669"/>
    <property type="project" value="UniProtKB-UniRule"/>
</dbReference>
<dbReference type="FunFam" id="3.30.70.1400:FF:000001">
    <property type="entry name" value="Aminomethyltransferase"/>
    <property type="match status" value="1"/>
</dbReference>
<dbReference type="Gene3D" id="2.40.30.110">
    <property type="entry name" value="Aminomethyltransferase beta-barrel domains"/>
    <property type="match status" value="1"/>
</dbReference>
<dbReference type="Gene3D" id="3.30.70.1400">
    <property type="entry name" value="Aminomethyltransferase beta-barrel domains"/>
    <property type="match status" value="1"/>
</dbReference>
<dbReference type="Gene3D" id="4.10.1250.10">
    <property type="entry name" value="Aminomethyltransferase fragment"/>
    <property type="match status" value="1"/>
</dbReference>
<dbReference type="Gene3D" id="3.30.1360.120">
    <property type="entry name" value="Probable tRNA modification gtpase trme, domain 1"/>
    <property type="match status" value="1"/>
</dbReference>
<dbReference type="HAMAP" id="MF_00259">
    <property type="entry name" value="GcvT"/>
    <property type="match status" value="1"/>
</dbReference>
<dbReference type="InterPro" id="IPR006223">
    <property type="entry name" value="GCS_T"/>
</dbReference>
<dbReference type="InterPro" id="IPR022903">
    <property type="entry name" value="GCS_T_bac"/>
</dbReference>
<dbReference type="InterPro" id="IPR013977">
    <property type="entry name" value="GCST_C"/>
</dbReference>
<dbReference type="InterPro" id="IPR006222">
    <property type="entry name" value="GCV_T_N"/>
</dbReference>
<dbReference type="InterPro" id="IPR028896">
    <property type="entry name" value="GcvT/YgfZ/DmdA"/>
</dbReference>
<dbReference type="InterPro" id="IPR029043">
    <property type="entry name" value="GcvT/YgfZ_C"/>
</dbReference>
<dbReference type="InterPro" id="IPR027266">
    <property type="entry name" value="TrmE/GcvT_dom1"/>
</dbReference>
<dbReference type="NCBIfam" id="TIGR00528">
    <property type="entry name" value="gcvT"/>
    <property type="match status" value="1"/>
</dbReference>
<dbReference type="NCBIfam" id="NF001567">
    <property type="entry name" value="PRK00389.1"/>
    <property type="match status" value="1"/>
</dbReference>
<dbReference type="PANTHER" id="PTHR43757">
    <property type="entry name" value="AMINOMETHYLTRANSFERASE"/>
    <property type="match status" value="1"/>
</dbReference>
<dbReference type="PANTHER" id="PTHR43757:SF2">
    <property type="entry name" value="AMINOMETHYLTRANSFERASE, MITOCHONDRIAL"/>
    <property type="match status" value="1"/>
</dbReference>
<dbReference type="Pfam" id="PF01571">
    <property type="entry name" value="GCV_T"/>
    <property type="match status" value="1"/>
</dbReference>
<dbReference type="Pfam" id="PF08669">
    <property type="entry name" value="GCV_T_C"/>
    <property type="match status" value="1"/>
</dbReference>
<dbReference type="PIRSF" id="PIRSF006487">
    <property type="entry name" value="GcvT"/>
    <property type="match status" value="1"/>
</dbReference>
<dbReference type="SUPFAM" id="SSF101790">
    <property type="entry name" value="Aminomethyltransferase beta-barrel domain"/>
    <property type="match status" value="1"/>
</dbReference>
<dbReference type="SUPFAM" id="SSF103025">
    <property type="entry name" value="Folate-binding domain"/>
    <property type="match status" value="1"/>
</dbReference>
<accession>Q14J42</accession>
<sequence length="358" mass="39584">MLKTPLYESHMAANAKMVDFSGWSMPINYGSQIQEHNNVREDCGIFDVSHMLAVDIQGSEAEKFLRYLLANDVAKLQENKAQYGCMLNHDAGIVDDLITYKVTDEHFRIVVNAGNRESDVAWFNQNAQNFDVAITPQTDLAIVAVQGPKAVAVIKRVVTKEIATEIEALLPFSFKFFSKWMVARTGYTGEDGFEVILPATQVKKFWDSLLENGAQPAGLGARDTLRLEAGMHLYGADMDTSTTPLERGLGWSVDLSDEHRDFIGKKAYFAKKAQGVDTKWVGVVLKTKGVLRAGQEIDFDNGEKGYITSGSFSPTLKVAIGLAYVPKQADNPVVNIRGKELEVELVKPKFVKNGKSLI</sequence>